<feature type="chain" id="PRO_1000077882" description="UvrABC system protein B">
    <location>
        <begin position="1"/>
        <end position="672"/>
    </location>
</feature>
<feature type="domain" description="Helicase ATP-binding" evidence="1">
    <location>
        <begin position="26"/>
        <end position="181"/>
    </location>
</feature>
<feature type="domain" description="Helicase C-terminal" evidence="1">
    <location>
        <begin position="430"/>
        <end position="592"/>
    </location>
</feature>
<feature type="domain" description="UVR" evidence="1">
    <location>
        <begin position="631"/>
        <end position="666"/>
    </location>
</feature>
<feature type="short sequence motif" description="Beta-hairpin">
    <location>
        <begin position="92"/>
        <end position="115"/>
    </location>
</feature>
<feature type="binding site" evidence="1">
    <location>
        <begin position="39"/>
        <end position="46"/>
    </location>
    <ligand>
        <name>ATP</name>
        <dbReference type="ChEBI" id="CHEBI:30616"/>
    </ligand>
</feature>
<accession>A9KCU2</accession>
<reference key="1">
    <citation type="journal article" date="2009" name="Infect. Immun.">
        <title>Comparative genomics reveal extensive transposon-mediated genomic plasticity and diversity among potential effector proteins within the genus Coxiella.</title>
        <authorList>
            <person name="Beare P.A."/>
            <person name="Unsworth N."/>
            <person name="Andoh M."/>
            <person name="Voth D.E."/>
            <person name="Omsland A."/>
            <person name="Gilk S.D."/>
            <person name="Williams K.P."/>
            <person name="Sobral B.W."/>
            <person name="Kupko J.J. III"/>
            <person name="Porcella S.F."/>
            <person name="Samuel J.E."/>
            <person name="Heinzen R.A."/>
        </authorList>
    </citation>
    <scope>NUCLEOTIDE SEQUENCE [LARGE SCALE GENOMIC DNA]</scope>
    <source>
        <strain>Dugway 5J108-111</strain>
    </source>
</reference>
<sequence length="672" mass="77352">MSKAFKLTSKFKPSGDQPQAIEKLVAGLEDGLAYQTLLGVTGSGKTFTIANAIEKVQRPTLILEPNKTLAAQFYAEMREFFPENAVEYFVSYYDYYQPEAYVPSSDTYIEKDASINDHIEQMRLSATKAITERHDTIIIATVSAIYGLGDPDSYLKMLLHLTRGDQIDQRKILQRLAELQYTRNDLELRRATYRVNGDIIDIYPADSEREAVRVELFDDEVENLSYFDPLTGEMLRRVPRITVYPKTHYVTPREKLLSTLDQIKIELKERLSQLEKANKLVERQRLEQRTKFDMEMILELGYCSGIENYSRYLSGRNEGEPPPTLIDYLPKDALLIIDESHVTIPQLGGMYRGDRARKETLVEYGFRLPSALDNRPLRFDEFEKLAPQTIFISATPGPYEEKQSDQVVELLVRPTGLIDPEIEVRPVATQVDDLLSEIKKRAAQNERVLVTTLTKRMAEDLTEYFTEHNVRVRYLHSDIDTVERVEIIRDLRLGVFDVLVGINLLREGLDIPEVSLVAILDADKEGFLRSERSLIQTMGRAARNVHGKAILYADRITDSMKRAMEEAERRRIAQSAYNEKHHITPKSIQKAVTEIIEGARTYTERGRFVNQAQLIAEEESKYIAMTPKQLAKELRKLEEQMYHHARNLEFEEAAAVRDKIQHIRKGLLEVKE</sequence>
<keyword id="KW-0067">ATP-binding</keyword>
<keyword id="KW-0963">Cytoplasm</keyword>
<keyword id="KW-0227">DNA damage</keyword>
<keyword id="KW-0228">DNA excision</keyword>
<keyword id="KW-0234">DNA repair</keyword>
<keyword id="KW-0267">Excision nuclease</keyword>
<keyword id="KW-0347">Helicase</keyword>
<keyword id="KW-0378">Hydrolase</keyword>
<keyword id="KW-0547">Nucleotide-binding</keyword>
<keyword id="KW-0742">SOS response</keyword>
<gene>
    <name evidence="1" type="primary">uvrB</name>
    <name type="ordered locus">CBUD_1544</name>
</gene>
<name>UVRB_COXBN</name>
<protein>
    <recommendedName>
        <fullName evidence="1">UvrABC system protein B</fullName>
        <shortName evidence="1">Protein UvrB</shortName>
    </recommendedName>
    <alternativeName>
        <fullName evidence="1">Excinuclease ABC subunit B</fullName>
    </alternativeName>
</protein>
<dbReference type="EMBL" id="CP000733">
    <property type="protein sequence ID" value="ABS76877.1"/>
    <property type="molecule type" value="Genomic_DNA"/>
</dbReference>
<dbReference type="RefSeq" id="WP_011997142.1">
    <property type="nucleotide sequence ID" value="NC_009727.1"/>
</dbReference>
<dbReference type="SMR" id="A9KCU2"/>
<dbReference type="KEGG" id="cbd:CBUD_1544"/>
<dbReference type="HOGENOM" id="CLU_009621_2_1_6"/>
<dbReference type="Proteomes" id="UP000008555">
    <property type="component" value="Chromosome"/>
</dbReference>
<dbReference type="GO" id="GO:0005737">
    <property type="term" value="C:cytoplasm"/>
    <property type="evidence" value="ECO:0007669"/>
    <property type="project" value="UniProtKB-SubCell"/>
</dbReference>
<dbReference type="GO" id="GO:0009380">
    <property type="term" value="C:excinuclease repair complex"/>
    <property type="evidence" value="ECO:0007669"/>
    <property type="project" value="InterPro"/>
</dbReference>
<dbReference type="GO" id="GO:0005524">
    <property type="term" value="F:ATP binding"/>
    <property type="evidence" value="ECO:0007669"/>
    <property type="project" value="UniProtKB-UniRule"/>
</dbReference>
<dbReference type="GO" id="GO:0016887">
    <property type="term" value="F:ATP hydrolysis activity"/>
    <property type="evidence" value="ECO:0007669"/>
    <property type="project" value="InterPro"/>
</dbReference>
<dbReference type="GO" id="GO:0003677">
    <property type="term" value="F:DNA binding"/>
    <property type="evidence" value="ECO:0007669"/>
    <property type="project" value="UniProtKB-UniRule"/>
</dbReference>
<dbReference type="GO" id="GO:0009381">
    <property type="term" value="F:excinuclease ABC activity"/>
    <property type="evidence" value="ECO:0007669"/>
    <property type="project" value="UniProtKB-UniRule"/>
</dbReference>
<dbReference type="GO" id="GO:0004386">
    <property type="term" value="F:helicase activity"/>
    <property type="evidence" value="ECO:0007669"/>
    <property type="project" value="UniProtKB-KW"/>
</dbReference>
<dbReference type="GO" id="GO:0006289">
    <property type="term" value="P:nucleotide-excision repair"/>
    <property type="evidence" value="ECO:0007669"/>
    <property type="project" value="UniProtKB-UniRule"/>
</dbReference>
<dbReference type="GO" id="GO:0009432">
    <property type="term" value="P:SOS response"/>
    <property type="evidence" value="ECO:0007669"/>
    <property type="project" value="UniProtKB-UniRule"/>
</dbReference>
<dbReference type="CDD" id="cd17916">
    <property type="entry name" value="DEXHc_UvrB"/>
    <property type="match status" value="1"/>
</dbReference>
<dbReference type="CDD" id="cd18790">
    <property type="entry name" value="SF2_C_UvrB"/>
    <property type="match status" value="1"/>
</dbReference>
<dbReference type="FunFam" id="3.40.50.300:FF:000477">
    <property type="entry name" value="UvrABC system protein B"/>
    <property type="match status" value="1"/>
</dbReference>
<dbReference type="Gene3D" id="6.10.140.240">
    <property type="match status" value="1"/>
</dbReference>
<dbReference type="Gene3D" id="3.40.50.300">
    <property type="entry name" value="P-loop containing nucleotide triphosphate hydrolases"/>
    <property type="match status" value="3"/>
</dbReference>
<dbReference type="Gene3D" id="4.10.860.10">
    <property type="entry name" value="UVR domain"/>
    <property type="match status" value="1"/>
</dbReference>
<dbReference type="HAMAP" id="MF_00204">
    <property type="entry name" value="UvrB"/>
    <property type="match status" value="1"/>
</dbReference>
<dbReference type="InterPro" id="IPR006935">
    <property type="entry name" value="Helicase/UvrB_N"/>
</dbReference>
<dbReference type="InterPro" id="IPR014001">
    <property type="entry name" value="Helicase_ATP-bd"/>
</dbReference>
<dbReference type="InterPro" id="IPR001650">
    <property type="entry name" value="Helicase_C-like"/>
</dbReference>
<dbReference type="InterPro" id="IPR027417">
    <property type="entry name" value="P-loop_NTPase"/>
</dbReference>
<dbReference type="InterPro" id="IPR001943">
    <property type="entry name" value="UVR_dom"/>
</dbReference>
<dbReference type="InterPro" id="IPR036876">
    <property type="entry name" value="UVR_dom_sf"/>
</dbReference>
<dbReference type="InterPro" id="IPR004807">
    <property type="entry name" value="UvrB"/>
</dbReference>
<dbReference type="InterPro" id="IPR041471">
    <property type="entry name" value="UvrB_inter"/>
</dbReference>
<dbReference type="InterPro" id="IPR024759">
    <property type="entry name" value="UvrB_YAD/RRR_dom"/>
</dbReference>
<dbReference type="NCBIfam" id="NF003673">
    <property type="entry name" value="PRK05298.1"/>
    <property type="match status" value="1"/>
</dbReference>
<dbReference type="NCBIfam" id="TIGR00631">
    <property type="entry name" value="uvrb"/>
    <property type="match status" value="1"/>
</dbReference>
<dbReference type="PANTHER" id="PTHR24029">
    <property type="entry name" value="UVRABC SYSTEM PROTEIN B"/>
    <property type="match status" value="1"/>
</dbReference>
<dbReference type="PANTHER" id="PTHR24029:SF0">
    <property type="entry name" value="UVRABC SYSTEM PROTEIN B"/>
    <property type="match status" value="1"/>
</dbReference>
<dbReference type="Pfam" id="PF00271">
    <property type="entry name" value="Helicase_C"/>
    <property type="match status" value="1"/>
</dbReference>
<dbReference type="Pfam" id="PF04851">
    <property type="entry name" value="ResIII"/>
    <property type="match status" value="1"/>
</dbReference>
<dbReference type="Pfam" id="PF02151">
    <property type="entry name" value="UVR"/>
    <property type="match status" value="1"/>
</dbReference>
<dbReference type="Pfam" id="PF12344">
    <property type="entry name" value="UvrB"/>
    <property type="match status" value="1"/>
</dbReference>
<dbReference type="Pfam" id="PF17757">
    <property type="entry name" value="UvrB_inter"/>
    <property type="match status" value="1"/>
</dbReference>
<dbReference type="SMART" id="SM00487">
    <property type="entry name" value="DEXDc"/>
    <property type="match status" value="1"/>
</dbReference>
<dbReference type="SMART" id="SM00490">
    <property type="entry name" value="HELICc"/>
    <property type="match status" value="1"/>
</dbReference>
<dbReference type="SUPFAM" id="SSF46600">
    <property type="entry name" value="C-terminal UvrC-binding domain of UvrB"/>
    <property type="match status" value="1"/>
</dbReference>
<dbReference type="SUPFAM" id="SSF52540">
    <property type="entry name" value="P-loop containing nucleoside triphosphate hydrolases"/>
    <property type="match status" value="2"/>
</dbReference>
<dbReference type="PROSITE" id="PS51192">
    <property type="entry name" value="HELICASE_ATP_BIND_1"/>
    <property type="match status" value="1"/>
</dbReference>
<dbReference type="PROSITE" id="PS51194">
    <property type="entry name" value="HELICASE_CTER"/>
    <property type="match status" value="1"/>
</dbReference>
<dbReference type="PROSITE" id="PS50151">
    <property type="entry name" value="UVR"/>
    <property type="match status" value="1"/>
</dbReference>
<evidence type="ECO:0000255" key="1">
    <source>
        <dbReference type="HAMAP-Rule" id="MF_00204"/>
    </source>
</evidence>
<organism>
    <name type="scientific">Coxiella burnetii (strain Dugway 5J108-111)</name>
    <dbReference type="NCBI Taxonomy" id="434922"/>
    <lineage>
        <taxon>Bacteria</taxon>
        <taxon>Pseudomonadati</taxon>
        <taxon>Pseudomonadota</taxon>
        <taxon>Gammaproteobacteria</taxon>
        <taxon>Legionellales</taxon>
        <taxon>Coxiellaceae</taxon>
        <taxon>Coxiella</taxon>
    </lineage>
</organism>
<comment type="function">
    <text evidence="1">The UvrABC repair system catalyzes the recognition and processing of DNA lesions. A damage recognition complex composed of 2 UvrA and 2 UvrB subunits scans DNA for abnormalities. Upon binding of the UvrA(2)B(2) complex to a putative damaged site, the DNA wraps around one UvrB monomer. DNA wrap is dependent on ATP binding by UvrB and probably causes local melting of the DNA helix, facilitating insertion of UvrB beta-hairpin between the DNA strands. Then UvrB probes one DNA strand for the presence of a lesion. If a lesion is found the UvrA subunits dissociate and the UvrB-DNA preincision complex is formed. This complex is subsequently bound by UvrC and the second UvrB is released. If no lesion is found, the DNA wraps around the other UvrB subunit that will check the other stand for damage.</text>
</comment>
<comment type="subunit">
    <text evidence="1">Forms a heterotetramer with UvrA during the search for lesions. Interacts with UvrC in an incision complex.</text>
</comment>
<comment type="subcellular location">
    <subcellularLocation>
        <location evidence="1">Cytoplasm</location>
    </subcellularLocation>
</comment>
<comment type="domain">
    <text evidence="1">The beta-hairpin motif is involved in DNA binding.</text>
</comment>
<comment type="similarity">
    <text evidence="1">Belongs to the UvrB family.</text>
</comment>
<proteinExistence type="inferred from homology"/>